<proteinExistence type="inferred from homology"/>
<gene>
    <name evidence="1" type="primary">rpsF</name>
    <name type="ordered locus">BLi04363</name>
    <name type="ordered locus">BL00100</name>
</gene>
<protein>
    <recommendedName>
        <fullName evidence="1">Small ribosomal subunit protein bS6</fullName>
    </recommendedName>
    <alternativeName>
        <fullName evidence="2">30S ribosomal protein S6</fullName>
    </alternativeName>
</protein>
<name>RS6_BACLD</name>
<reference key="1">
    <citation type="journal article" date="2004" name="J. Mol. Microbiol. Biotechnol.">
        <title>The complete genome sequence of Bacillus licheniformis DSM13, an organism with great industrial potential.</title>
        <authorList>
            <person name="Veith B."/>
            <person name="Herzberg C."/>
            <person name="Steckel S."/>
            <person name="Feesche J."/>
            <person name="Maurer K.H."/>
            <person name="Ehrenreich P."/>
            <person name="Baeumer S."/>
            <person name="Henne A."/>
            <person name="Liesegang H."/>
            <person name="Merkl R."/>
            <person name="Ehrenreich A."/>
            <person name="Gottschalk G."/>
        </authorList>
    </citation>
    <scope>NUCLEOTIDE SEQUENCE [LARGE SCALE GENOMIC DNA]</scope>
    <source>
        <strain>ATCC 14580 / DSM 13 / JCM 2505 / CCUG 7422 / NBRC 12200 / NCIMB 9375 / NCTC 10341 / NRRL NRS-1264 / Gibson 46</strain>
    </source>
</reference>
<reference key="2">
    <citation type="journal article" date="2004" name="Genome Biol.">
        <title>Complete genome sequence of the industrial bacterium Bacillus licheniformis and comparisons with closely related Bacillus species.</title>
        <authorList>
            <person name="Rey M.W."/>
            <person name="Ramaiya P."/>
            <person name="Nelson B.A."/>
            <person name="Brody-Karpin S.D."/>
            <person name="Zaretsky E.J."/>
            <person name="Tang M."/>
            <person name="Lopez de Leon A."/>
            <person name="Xiang H."/>
            <person name="Gusti V."/>
            <person name="Clausen I.G."/>
            <person name="Olsen P.B."/>
            <person name="Rasmussen M.D."/>
            <person name="Andersen J.T."/>
            <person name="Joergensen P.L."/>
            <person name="Larsen T.S."/>
            <person name="Sorokin A."/>
            <person name="Bolotin A."/>
            <person name="Lapidus A."/>
            <person name="Galleron N."/>
            <person name="Ehrlich S.D."/>
            <person name="Berka R.M."/>
        </authorList>
    </citation>
    <scope>NUCLEOTIDE SEQUENCE [LARGE SCALE GENOMIC DNA]</scope>
    <source>
        <strain>ATCC 14580 / DSM 13 / JCM 2505 / CCUG 7422 / NBRC 12200 / NCIMB 9375 / NCTC 10341 / NRRL NRS-1264 / Gibson 46</strain>
    </source>
</reference>
<dbReference type="EMBL" id="AE017333">
    <property type="protein sequence ID" value="AAU43171.1"/>
    <property type="molecule type" value="Genomic_DNA"/>
</dbReference>
<dbReference type="EMBL" id="CP000002">
    <property type="protein sequence ID" value="AAU25789.1"/>
    <property type="molecule type" value="Genomic_DNA"/>
</dbReference>
<dbReference type="RefSeq" id="WP_003178026.1">
    <property type="nucleotide sequence ID" value="NC_006322.1"/>
</dbReference>
<dbReference type="SMR" id="Q65CP3"/>
<dbReference type="STRING" id="279010.BL00100"/>
<dbReference type="GeneID" id="92859067"/>
<dbReference type="KEGG" id="bld:BLi04363"/>
<dbReference type="KEGG" id="bli:BL00100"/>
<dbReference type="eggNOG" id="COG0360">
    <property type="taxonomic scope" value="Bacteria"/>
</dbReference>
<dbReference type="HOGENOM" id="CLU_113441_5_3_9"/>
<dbReference type="Proteomes" id="UP000000606">
    <property type="component" value="Chromosome"/>
</dbReference>
<dbReference type="GO" id="GO:0005737">
    <property type="term" value="C:cytoplasm"/>
    <property type="evidence" value="ECO:0007669"/>
    <property type="project" value="UniProtKB-ARBA"/>
</dbReference>
<dbReference type="GO" id="GO:1990904">
    <property type="term" value="C:ribonucleoprotein complex"/>
    <property type="evidence" value="ECO:0007669"/>
    <property type="project" value="UniProtKB-KW"/>
</dbReference>
<dbReference type="GO" id="GO:0005840">
    <property type="term" value="C:ribosome"/>
    <property type="evidence" value="ECO:0007669"/>
    <property type="project" value="UniProtKB-KW"/>
</dbReference>
<dbReference type="GO" id="GO:0070181">
    <property type="term" value="F:small ribosomal subunit rRNA binding"/>
    <property type="evidence" value="ECO:0007669"/>
    <property type="project" value="TreeGrafter"/>
</dbReference>
<dbReference type="GO" id="GO:0003735">
    <property type="term" value="F:structural constituent of ribosome"/>
    <property type="evidence" value="ECO:0007669"/>
    <property type="project" value="InterPro"/>
</dbReference>
<dbReference type="GO" id="GO:0006412">
    <property type="term" value="P:translation"/>
    <property type="evidence" value="ECO:0007669"/>
    <property type="project" value="UniProtKB-UniRule"/>
</dbReference>
<dbReference type="CDD" id="cd00473">
    <property type="entry name" value="bS6"/>
    <property type="match status" value="1"/>
</dbReference>
<dbReference type="FunFam" id="3.30.70.60:FF:000002">
    <property type="entry name" value="30S ribosomal protein S6"/>
    <property type="match status" value="1"/>
</dbReference>
<dbReference type="Gene3D" id="3.30.70.60">
    <property type="match status" value="1"/>
</dbReference>
<dbReference type="HAMAP" id="MF_00360">
    <property type="entry name" value="Ribosomal_bS6"/>
    <property type="match status" value="1"/>
</dbReference>
<dbReference type="InterPro" id="IPR000529">
    <property type="entry name" value="Ribosomal_bS6"/>
</dbReference>
<dbReference type="InterPro" id="IPR020815">
    <property type="entry name" value="Ribosomal_bS6_CS"/>
</dbReference>
<dbReference type="InterPro" id="IPR035980">
    <property type="entry name" value="Ribosomal_bS6_sf"/>
</dbReference>
<dbReference type="InterPro" id="IPR020814">
    <property type="entry name" value="Ribosomal_S6_plastid/chlpt"/>
</dbReference>
<dbReference type="InterPro" id="IPR014717">
    <property type="entry name" value="Transl_elong_EF1B/ribsomal_bS6"/>
</dbReference>
<dbReference type="NCBIfam" id="TIGR00166">
    <property type="entry name" value="S6"/>
    <property type="match status" value="1"/>
</dbReference>
<dbReference type="PANTHER" id="PTHR21011">
    <property type="entry name" value="MITOCHONDRIAL 28S RIBOSOMAL PROTEIN S6"/>
    <property type="match status" value="1"/>
</dbReference>
<dbReference type="PANTHER" id="PTHR21011:SF1">
    <property type="entry name" value="SMALL RIBOSOMAL SUBUNIT PROTEIN BS6M"/>
    <property type="match status" value="1"/>
</dbReference>
<dbReference type="Pfam" id="PF01250">
    <property type="entry name" value="Ribosomal_S6"/>
    <property type="match status" value="1"/>
</dbReference>
<dbReference type="SUPFAM" id="SSF54995">
    <property type="entry name" value="Ribosomal protein S6"/>
    <property type="match status" value="1"/>
</dbReference>
<dbReference type="PROSITE" id="PS01048">
    <property type="entry name" value="RIBOSOMAL_S6"/>
    <property type="match status" value="1"/>
</dbReference>
<sequence length="95" mass="11210">MRKYEIMYIIRPDVDEESKKAVVERFNNILTTNGAEITETKDWGKRRLAYEINDFRDGFYQILNVQAGAEAVQEFDRLAKISDDIIRHIVVKEEE</sequence>
<evidence type="ECO:0000255" key="1">
    <source>
        <dbReference type="HAMAP-Rule" id="MF_00360"/>
    </source>
</evidence>
<evidence type="ECO:0000305" key="2"/>
<accession>Q65CP3</accession>
<accession>Q62N72</accession>
<organism>
    <name type="scientific">Bacillus licheniformis (strain ATCC 14580 / DSM 13 / JCM 2505 / CCUG 7422 / NBRC 12200 / NCIMB 9375 / NCTC 10341 / NRRL NRS-1264 / Gibson 46)</name>
    <dbReference type="NCBI Taxonomy" id="279010"/>
    <lineage>
        <taxon>Bacteria</taxon>
        <taxon>Bacillati</taxon>
        <taxon>Bacillota</taxon>
        <taxon>Bacilli</taxon>
        <taxon>Bacillales</taxon>
        <taxon>Bacillaceae</taxon>
        <taxon>Bacillus</taxon>
    </lineage>
</organism>
<comment type="function">
    <text evidence="1">Binds together with bS18 to 16S ribosomal RNA.</text>
</comment>
<comment type="similarity">
    <text evidence="1">Belongs to the bacterial ribosomal protein bS6 family.</text>
</comment>
<keyword id="KW-1185">Reference proteome</keyword>
<keyword id="KW-0687">Ribonucleoprotein</keyword>
<keyword id="KW-0689">Ribosomal protein</keyword>
<keyword id="KW-0694">RNA-binding</keyword>
<keyword id="KW-0699">rRNA-binding</keyword>
<feature type="chain" id="PRO_0000229523" description="Small ribosomal subunit protein bS6">
    <location>
        <begin position="1"/>
        <end position="95"/>
    </location>
</feature>